<sequence length="102" mass="10490">MKKVLALVVAAAMGLSSAAFAAETATTPAPTATTTKAAPAKTTHHKKQHKAAPAQKAQAAKKHHKNTKAEQKAPEQKAQAAKKHAGKHSHQQPAKPAAQPAA</sequence>
<gene>
    <name evidence="1" type="primary">asr</name>
    <name type="ordered locus">ECIAI1_1647</name>
</gene>
<keyword id="KW-0574">Periplasm</keyword>
<keyword id="KW-0732">Signal</keyword>
<proteinExistence type="inferred from homology"/>
<feature type="signal peptide" evidence="1">
    <location>
        <begin position="1"/>
        <end position="21"/>
    </location>
</feature>
<feature type="propeptide" id="PRO_1000128925" evidence="1">
    <location>
        <begin position="22"/>
        <end position="58"/>
    </location>
</feature>
<feature type="chain" id="PRO_1000128926" description="Acid shock protein">
    <location>
        <begin position="59"/>
        <end position="102"/>
    </location>
</feature>
<feature type="region of interest" description="Disordered" evidence="2">
    <location>
        <begin position="22"/>
        <end position="102"/>
    </location>
</feature>
<feature type="compositionally biased region" description="Low complexity" evidence="2">
    <location>
        <begin position="22"/>
        <end position="41"/>
    </location>
</feature>
<feature type="compositionally biased region" description="Basic residues" evidence="2">
    <location>
        <begin position="80"/>
        <end position="90"/>
    </location>
</feature>
<feature type="compositionally biased region" description="Low complexity" evidence="2">
    <location>
        <begin position="91"/>
        <end position="102"/>
    </location>
</feature>
<accession>B7LZY9</accession>
<dbReference type="EMBL" id="CU928160">
    <property type="protein sequence ID" value="CAQ98504.1"/>
    <property type="molecule type" value="Genomic_DNA"/>
</dbReference>
<dbReference type="RefSeq" id="WP_001342195.1">
    <property type="nucleotide sequence ID" value="NC_011741.1"/>
</dbReference>
<dbReference type="GeneID" id="75204440"/>
<dbReference type="KEGG" id="ecr:ECIAI1_1647"/>
<dbReference type="HOGENOM" id="CLU_102486_2_0_6"/>
<dbReference type="GO" id="GO:0042597">
    <property type="term" value="C:periplasmic space"/>
    <property type="evidence" value="ECO:0007669"/>
    <property type="project" value="UniProtKB-SubCell"/>
</dbReference>
<dbReference type="HAMAP" id="MF_00546">
    <property type="entry name" value="Asr"/>
    <property type="match status" value="1"/>
</dbReference>
<dbReference type="InterPro" id="IPR023497">
    <property type="entry name" value="Acid_shock"/>
</dbReference>
<dbReference type="NCBIfam" id="NF033636">
    <property type="entry name" value="acid_shock_Asr"/>
    <property type="match status" value="1"/>
</dbReference>
<dbReference type="Pfam" id="PF06392">
    <property type="entry name" value="Asr"/>
    <property type="match status" value="1"/>
</dbReference>
<reference key="1">
    <citation type="journal article" date="2009" name="PLoS Genet.">
        <title>Organised genome dynamics in the Escherichia coli species results in highly diverse adaptive paths.</title>
        <authorList>
            <person name="Touchon M."/>
            <person name="Hoede C."/>
            <person name="Tenaillon O."/>
            <person name="Barbe V."/>
            <person name="Baeriswyl S."/>
            <person name="Bidet P."/>
            <person name="Bingen E."/>
            <person name="Bonacorsi S."/>
            <person name="Bouchier C."/>
            <person name="Bouvet O."/>
            <person name="Calteau A."/>
            <person name="Chiapello H."/>
            <person name="Clermont O."/>
            <person name="Cruveiller S."/>
            <person name="Danchin A."/>
            <person name="Diard M."/>
            <person name="Dossat C."/>
            <person name="Karoui M.E."/>
            <person name="Frapy E."/>
            <person name="Garry L."/>
            <person name="Ghigo J.M."/>
            <person name="Gilles A.M."/>
            <person name="Johnson J."/>
            <person name="Le Bouguenec C."/>
            <person name="Lescat M."/>
            <person name="Mangenot S."/>
            <person name="Martinez-Jehanne V."/>
            <person name="Matic I."/>
            <person name="Nassif X."/>
            <person name="Oztas S."/>
            <person name="Petit M.A."/>
            <person name="Pichon C."/>
            <person name="Rouy Z."/>
            <person name="Ruf C.S."/>
            <person name="Schneider D."/>
            <person name="Tourret J."/>
            <person name="Vacherie B."/>
            <person name="Vallenet D."/>
            <person name="Medigue C."/>
            <person name="Rocha E.P.C."/>
            <person name="Denamur E."/>
        </authorList>
    </citation>
    <scope>NUCLEOTIDE SEQUENCE [LARGE SCALE GENOMIC DNA]</scope>
    <source>
        <strain>IAI1</strain>
    </source>
</reference>
<comment type="function">
    <text evidence="1">Required for growth and/or survival at acidic conditions.</text>
</comment>
<comment type="subcellular location">
    <subcellularLocation>
        <location evidence="1">Periplasm</location>
    </subcellularLocation>
</comment>
<comment type="PTM">
    <text evidence="1">Proteolytic processing gives rise to the active protein.</text>
</comment>
<comment type="similarity">
    <text evidence="1">Belongs to the Asr family.</text>
</comment>
<name>ASR_ECO8A</name>
<evidence type="ECO:0000255" key="1">
    <source>
        <dbReference type="HAMAP-Rule" id="MF_00546"/>
    </source>
</evidence>
<evidence type="ECO:0000256" key="2">
    <source>
        <dbReference type="SAM" id="MobiDB-lite"/>
    </source>
</evidence>
<protein>
    <recommendedName>
        <fullName evidence="1">Acid shock protein</fullName>
    </recommendedName>
</protein>
<organism>
    <name type="scientific">Escherichia coli O8 (strain IAI1)</name>
    <dbReference type="NCBI Taxonomy" id="585034"/>
    <lineage>
        <taxon>Bacteria</taxon>
        <taxon>Pseudomonadati</taxon>
        <taxon>Pseudomonadota</taxon>
        <taxon>Gammaproteobacteria</taxon>
        <taxon>Enterobacterales</taxon>
        <taxon>Enterobacteriaceae</taxon>
        <taxon>Escherichia</taxon>
    </lineage>
</organism>